<feature type="chain" id="PRO_0000258578" description="Small ribosomal subunit protein uS10">
    <location>
        <begin position="1"/>
        <end position="102"/>
    </location>
</feature>
<organism>
    <name type="scientific">Streptococcus pyogenes serotype M4 (strain MGAS10750)</name>
    <dbReference type="NCBI Taxonomy" id="370554"/>
    <lineage>
        <taxon>Bacteria</taxon>
        <taxon>Bacillati</taxon>
        <taxon>Bacillota</taxon>
        <taxon>Bacilli</taxon>
        <taxon>Lactobacillales</taxon>
        <taxon>Streptococcaceae</taxon>
        <taxon>Streptococcus</taxon>
    </lineage>
</organism>
<proteinExistence type="inferred from homology"/>
<comment type="function">
    <text evidence="1">Involved in the binding of tRNA to the ribosomes.</text>
</comment>
<comment type="subunit">
    <text evidence="1">Part of the 30S ribosomal subunit.</text>
</comment>
<comment type="similarity">
    <text evidence="1">Belongs to the universal ribosomal protein uS10 family.</text>
</comment>
<reference key="1">
    <citation type="journal article" date="2006" name="Proc. Natl. Acad. Sci. U.S.A.">
        <title>Molecular genetic anatomy of inter- and intraserotype variation in the human bacterial pathogen group A Streptococcus.</title>
        <authorList>
            <person name="Beres S.B."/>
            <person name="Richter E.W."/>
            <person name="Nagiec M.J."/>
            <person name="Sumby P."/>
            <person name="Porcella S.F."/>
            <person name="DeLeo F.R."/>
            <person name="Musser J.M."/>
        </authorList>
    </citation>
    <scope>NUCLEOTIDE SEQUENCE [LARGE SCALE GENOMIC DNA]</scope>
    <source>
        <strain>MGAS10750</strain>
    </source>
</reference>
<dbReference type="EMBL" id="CP000262">
    <property type="protein sequence ID" value="ABF36994.1"/>
    <property type="molecule type" value="Genomic_DNA"/>
</dbReference>
<dbReference type="SMR" id="Q1J917"/>
<dbReference type="KEGG" id="spi:MGAS10750_Spy0044"/>
<dbReference type="HOGENOM" id="CLU_122625_1_3_9"/>
<dbReference type="Proteomes" id="UP000002434">
    <property type="component" value="Chromosome"/>
</dbReference>
<dbReference type="GO" id="GO:1990904">
    <property type="term" value="C:ribonucleoprotein complex"/>
    <property type="evidence" value="ECO:0007669"/>
    <property type="project" value="UniProtKB-KW"/>
</dbReference>
<dbReference type="GO" id="GO:0005840">
    <property type="term" value="C:ribosome"/>
    <property type="evidence" value="ECO:0007669"/>
    <property type="project" value="UniProtKB-KW"/>
</dbReference>
<dbReference type="GO" id="GO:0003735">
    <property type="term" value="F:structural constituent of ribosome"/>
    <property type="evidence" value="ECO:0007669"/>
    <property type="project" value="InterPro"/>
</dbReference>
<dbReference type="GO" id="GO:0000049">
    <property type="term" value="F:tRNA binding"/>
    <property type="evidence" value="ECO:0007669"/>
    <property type="project" value="UniProtKB-UniRule"/>
</dbReference>
<dbReference type="GO" id="GO:0006412">
    <property type="term" value="P:translation"/>
    <property type="evidence" value="ECO:0007669"/>
    <property type="project" value="UniProtKB-UniRule"/>
</dbReference>
<dbReference type="FunFam" id="3.30.70.600:FF:000001">
    <property type="entry name" value="30S ribosomal protein S10"/>
    <property type="match status" value="1"/>
</dbReference>
<dbReference type="Gene3D" id="3.30.70.600">
    <property type="entry name" value="Ribosomal protein S10 domain"/>
    <property type="match status" value="1"/>
</dbReference>
<dbReference type="HAMAP" id="MF_00508">
    <property type="entry name" value="Ribosomal_uS10"/>
    <property type="match status" value="1"/>
</dbReference>
<dbReference type="InterPro" id="IPR001848">
    <property type="entry name" value="Ribosomal_uS10"/>
</dbReference>
<dbReference type="InterPro" id="IPR018268">
    <property type="entry name" value="Ribosomal_uS10_CS"/>
</dbReference>
<dbReference type="InterPro" id="IPR027486">
    <property type="entry name" value="Ribosomal_uS10_dom"/>
</dbReference>
<dbReference type="InterPro" id="IPR036838">
    <property type="entry name" value="Ribosomal_uS10_dom_sf"/>
</dbReference>
<dbReference type="NCBIfam" id="NF001861">
    <property type="entry name" value="PRK00596.1"/>
    <property type="match status" value="1"/>
</dbReference>
<dbReference type="NCBIfam" id="TIGR01049">
    <property type="entry name" value="rpsJ_bact"/>
    <property type="match status" value="1"/>
</dbReference>
<dbReference type="PANTHER" id="PTHR11700">
    <property type="entry name" value="30S RIBOSOMAL PROTEIN S10 FAMILY MEMBER"/>
    <property type="match status" value="1"/>
</dbReference>
<dbReference type="Pfam" id="PF00338">
    <property type="entry name" value="Ribosomal_S10"/>
    <property type="match status" value="1"/>
</dbReference>
<dbReference type="PRINTS" id="PR00971">
    <property type="entry name" value="RIBOSOMALS10"/>
</dbReference>
<dbReference type="SMART" id="SM01403">
    <property type="entry name" value="Ribosomal_S10"/>
    <property type="match status" value="1"/>
</dbReference>
<dbReference type="SUPFAM" id="SSF54999">
    <property type="entry name" value="Ribosomal protein S10"/>
    <property type="match status" value="1"/>
</dbReference>
<dbReference type="PROSITE" id="PS00361">
    <property type="entry name" value="RIBOSOMAL_S10"/>
    <property type="match status" value="1"/>
</dbReference>
<protein>
    <recommendedName>
        <fullName evidence="1">Small ribosomal subunit protein uS10</fullName>
    </recommendedName>
    <alternativeName>
        <fullName evidence="2">30S ribosomal protein S10</fullName>
    </alternativeName>
</protein>
<sequence>MANKKIRIRLKAYEHRTLDTAAEKIVETATRTGATVAGPVPLPTERSLYTIIRATHKYKDSREQFEMRTHKRLVDIINPTQKTVDALMKLDLPSGVNVEIKL</sequence>
<name>RS10_STRPF</name>
<evidence type="ECO:0000255" key="1">
    <source>
        <dbReference type="HAMAP-Rule" id="MF_00508"/>
    </source>
</evidence>
<evidence type="ECO:0000305" key="2"/>
<accession>Q1J917</accession>
<keyword id="KW-0687">Ribonucleoprotein</keyword>
<keyword id="KW-0689">Ribosomal protein</keyword>
<gene>
    <name evidence="1" type="primary">rpsJ</name>
    <name type="ordered locus">MGAS10750_Spy0044</name>
</gene>